<feature type="chain" id="PRO_0000435462" description="Chorismatase">
    <location>
        <begin position="1"/>
        <end position="344"/>
    </location>
</feature>
<feature type="active site" description="Proton acceptor" evidence="2">
    <location>
        <position position="338"/>
    </location>
</feature>
<feature type="binding site" evidence="2">
    <location>
        <position position="155"/>
    </location>
    <ligand>
        <name>substrate</name>
    </ligand>
</feature>
<feature type="binding site" evidence="2">
    <location>
        <position position="162"/>
    </location>
    <ligand>
        <name>substrate</name>
    </ligand>
</feature>
<feature type="binding site" evidence="2">
    <location>
        <position position="215"/>
    </location>
    <ligand>
        <name>substrate</name>
    </ligand>
</feature>
<feature type="binding site" evidence="2">
    <location>
        <position position="228"/>
    </location>
    <ligand>
        <name>substrate</name>
    </ligand>
</feature>
<feature type="mutagenesis site" description="Decrease of the affinity for chorismate." evidence="2">
    <original>Y</original>
    <variation>F</variation>
    <location>
        <position position="215"/>
    </location>
</feature>
<feature type="mutagenesis site" description="Same activity as the wild-type." evidence="2">
    <original>R</original>
    <variation>A</variation>
    <location>
        <position position="228"/>
    </location>
</feature>
<feature type="mutagenesis site" description="Loss of chorismatase activity." evidence="2">
    <original>E</original>
    <variation>A</variation>
    <location>
        <position position="338"/>
    </location>
</feature>
<feature type="mutagenesis site" description="Loss of chorismatase activity." evidence="2">
    <original>E</original>
    <variation>Q</variation>
    <location>
        <position position="338"/>
    </location>
</feature>
<feature type="strand" evidence="5">
    <location>
        <begin position="21"/>
        <end position="25"/>
    </location>
</feature>
<feature type="strand" evidence="5">
    <location>
        <begin position="38"/>
        <end position="46"/>
    </location>
</feature>
<feature type="strand" evidence="5">
    <location>
        <begin position="52"/>
        <end position="54"/>
    </location>
</feature>
<feature type="strand" evidence="5">
    <location>
        <begin position="57"/>
        <end position="62"/>
    </location>
</feature>
<feature type="helix" evidence="5">
    <location>
        <begin position="68"/>
        <end position="70"/>
    </location>
</feature>
<feature type="strand" evidence="5">
    <location>
        <begin position="72"/>
        <end position="77"/>
    </location>
</feature>
<feature type="strand" evidence="5">
    <location>
        <begin position="82"/>
        <end position="87"/>
    </location>
</feature>
<feature type="strand" evidence="5">
    <location>
        <begin position="90"/>
        <end position="94"/>
    </location>
</feature>
<feature type="strand" evidence="5">
    <location>
        <begin position="96"/>
        <end position="105"/>
    </location>
</feature>
<feature type="helix" evidence="5">
    <location>
        <begin position="112"/>
        <end position="129"/>
    </location>
</feature>
<feature type="strand" evidence="5">
    <location>
        <begin position="133"/>
        <end position="142"/>
    </location>
</feature>
<feature type="turn" evidence="5">
    <location>
        <begin position="143"/>
        <end position="145"/>
    </location>
</feature>
<feature type="strand" evidence="5">
    <location>
        <begin position="151"/>
        <end position="153"/>
    </location>
</feature>
<feature type="helix" evidence="5">
    <location>
        <begin position="154"/>
        <end position="169"/>
    </location>
</feature>
<feature type="helix" evidence="5">
    <location>
        <begin position="173"/>
        <end position="175"/>
    </location>
</feature>
<feature type="strand" evidence="5">
    <location>
        <begin position="178"/>
        <end position="199"/>
    </location>
</feature>
<feature type="strand" evidence="5">
    <location>
        <begin position="201"/>
        <end position="204"/>
    </location>
</feature>
<feature type="helix" evidence="5">
    <location>
        <begin position="212"/>
        <end position="214"/>
    </location>
</feature>
<feature type="helix" evidence="5">
    <location>
        <begin position="217"/>
        <end position="219"/>
    </location>
</feature>
<feature type="strand" evidence="5">
    <location>
        <begin position="227"/>
        <end position="233"/>
    </location>
</feature>
<feature type="turn" evidence="5">
    <location>
        <begin position="235"/>
        <end position="237"/>
    </location>
</feature>
<feature type="strand" evidence="5">
    <location>
        <begin position="239"/>
        <end position="250"/>
    </location>
</feature>
<feature type="helix" evidence="5">
    <location>
        <begin position="259"/>
        <end position="274"/>
    </location>
</feature>
<feature type="helix" evidence="5">
    <location>
        <begin position="276"/>
        <end position="281"/>
    </location>
</feature>
<feature type="helix" evidence="5">
    <location>
        <begin position="290"/>
        <end position="292"/>
    </location>
</feature>
<feature type="strand" evidence="5">
    <location>
        <begin position="294"/>
        <end position="301"/>
    </location>
</feature>
<feature type="helix" evidence="5">
    <location>
        <begin position="303"/>
        <end position="305"/>
    </location>
</feature>
<feature type="helix" evidence="5">
    <location>
        <begin position="306"/>
        <end position="314"/>
    </location>
</feature>
<feature type="strand" evidence="5">
    <location>
        <begin position="323"/>
        <end position="327"/>
    </location>
</feature>
<feature type="strand" evidence="5">
    <location>
        <begin position="330"/>
        <end position="332"/>
    </location>
</feature>
<feature type="strand" evidence="5">
    <location>
        <begin position="337"/>
        <end position="343"/>
    </location>
</feature>
<gene>
    <name type="primary">fkbO</name>
</gene>
<organism>
    <name type="scientific">Streptomyces hygroscopicus</name>
    <dbReference type="NCBI Taxonomy" id="1912"/>
    <lineage>
        <taxon>Bacteria</taxon>
        <taxon>Bacillati</taxon>
        <taxon>Actinomycetota</taxon>
        <taxon>Actinomycetes</taxon>
        <taxon>Kitasatosporales</taxon>
        <taxon>Streptomycetaceae</taxon>
        <taxon>Streptomyces</taxon>
        <taxon>Streptomyces violaceusniger group</taxon>
    </lineage>
</organism>
<evidence type="ECO:0000269" key="1">
    <source>
    </source>
</evidence>
<evidence type="ECO:0000269" key="2">
    <source>
    </source>
</evidence>
<evidence type="ECO:0000303" key="3">
    <source>
    </source>
</evidence>
<evidence type="ECO:0000305" key="4"/>
<evidence type="ECO:0007829" key="5">
    <source>
        <dbReference type="PDB" id="4BPS"/>
    </source>
</evidence>
<name>FKBO_STRHY</name>
<accession>Q9KID9</accession>
<comment type="function">
    <text evidence="1 2">Involved in the biosynthesis of the macrocyclic amino acid-linked polyketides FK506 and FK520 which are potent immunosuppressants that prevent T-cell proliferation through initial binding to the immunophilin FKBP12. Catalyzes the hydrolysis of chorismate via a 1,4-conjugate elimination of water to yield (4R,5R)-4,5-dihydroxycyclohexa-1,5-dienecarboxylic acid (DCDC).</text>
</comment>
<comment type="catalytic activity">
    <reaction evidence="1 2">
        <text>chorismate + H2O = (3R,4R)-3,4-dihydroxy-3,4-dihydrobenzoate + pyruvate</text>
        <dbReference type="Rhea" id="RHEA:38319"/>
        <dbReference type="ChEBI" id="CHEBI:15361"/>
        <dbReference type="ChEBI" id="CHEBI:15377"/>
        <dbReference type="ChEBI" id="CHEBI:29748"/>
        <dbReference type="ChEBI" id="CHEBI:75717"/>
        <dbReference type="EC" id="3.3.2.13"/>
    </reaction>
</comment>
<comment type="activity regulation">
    <text evidence="2">Competitively inhibited by 3-(2-carboxyethyl)benzoate.</text>
</comment>
<comment type="biophysicochemical properties">
    <kinetics>
        <KM evidence="2">0.15 mM for chorismate</KM>
        <KM evidence="1">0.2 mM for chorismate</KM>
        <Vmax evidence="2">0.56 umol/min/mg enzyme</Vmax>
        <text evidence="1">kcat is 17.6 sec(-1) for chorismatase activity with chorismate as substrate.</text>
    </kinetics>
</comment>
<comment type="subunit">
    <text evidence="2">Monomer.</text>
</comment>
<comment type="similarity">
    <text evidence="4">Belongs to the FkbO/Hyg5 family.</text>
</comment>
<dbReference type="EC" id="3.3.2.13" evidence="1 2"/>
<dbReference type="EMBL" id="AF235504">
    <property type="protein sequence ID" value="AAF86394.1"/>
    <property type="molecule type" value="Genomic_DNA"/>
</dbReference>
<dbReference type="PDB" id="4BPS">
    <property type="method" value="X-ray"/>
    <property type="resolution" value="1.08 A"/>
    <property type="chains" value="A=1-344"/>
</dbReference>
<dbReference type="PDBsum" id="4BPS"/>
<dbReference type="SMR" id="Q9KID9"/>
<dbReference type="BindingDB" id="Q9KID9"/>
<dbReference type="ChEMBL" id="CHEMBL2331069"/>
<dbReference type="KEGG" id="ag:AAF86394"/>
<dbReference type="BioCyc" id="MetaCyc:MONOMER-124284"/>
<dbReference type="BRENDA" id="3.3.2.13">
    <property type="organism ID" value="6043"/>
</dbReference>
<dbReference type="EvolutionaryTrace" id="Q9KID9"/>
<dbReference type="GO" id="GO:0016803">
    <property type="term" value="F:ether hydrolase activity"/>
    <property type="evidence" value="ECO:0000314"/>
    <property type="project" value="UniProtKB"/>
</dbReference>
<dbReference type="CDD" id="cd06153">
    <property type="entry name" value="YjgF_YER057c_UK114_like_5"/>
    <property type="match status" value="1"/>
</dbReference>
<dbReference type="Gene3D" id="3.30.1330.40">
    <property type="entry name" value="RutC-like"/>
    <property type="match status" value="1"/>
</dbReference>
<dbReference type="InterPro" id="IPR031038">
    <property type="entry name" value="Chori_FkbO_Hyg5"/>
</dbReference>
<dbReference type="InterPro" id="IPR049368">
    <property type="entry name" value="FkbO_Hyg5-like_N"/>
</dbReference>
<dbReference type="InterPro" id="IPR035959">
    <property type="entry name" value="RutC-like_sf"/>
</dbReference>
<dbReference type="NCBIfam" id="TIGR04444">
    <property type="entry name" value="chori_FkbO_Hyg5"/>
    <property type="match status" value="1"/>
</dbReference>
<dbReference type="Pfam" id="PF21168">
    <property type="entry name" value="FkbO_Hyg5-like_N"/>
    <property type="match status" value="1"/>
</dbReference>
<dbReference type="SUPFAM" id="SSF55298">
    <property type="entry name" value="YjgF-like"/>
    <property type="match status" value="1"/>
</dbReference>
<keyword id="KW-0002">3D-structure</keyword>
<keyword id="KW-0378">Hydrolase</keyword>
<reference key="1">
    <citation type="journal article" date="2000" name="Gene">
        <title>The FK520 gene cluster of Streptomyces hygroscopicus var. ascomyceticus (ATCC 14891) contains genes for biosynthesis of unusual polyketide extender units.</title>
        <authorList>
            <person name="Wu K."/>
            <person name="Chung L."/>
            <person name="Revill W.P."/>
            <person name="Katz L."/>
            <person name="Reeves C.D."/>
        </authorList>
    </citation>
    <scope>NUCLEOTIDE SEQUENCE [GENOMIC DNA]</scope>
</reference>
<reference key="2">
    <citation type="journal article" date="2011" name="Proc. Natl. Acad. Sci. U.S.A.">
        <title>Biosynthesis of the immunosuppressants FK506, FK520, and rapamycin involves a previously undescribed family of enzymes acting on chorismate.</title>
        <authorList>
            <person name="Andexer J.N."/>
            <person name="Kendrew S.G."/>
            <person name="Nur-e-Alam M."/>
            <person name="Lazos O."/>
            <person name="Foster T.A."/>
            <person name="Zimmermann A.S."/>
            <person name="Warneck T.D."/>
            <person name="Suthar D."/>
            <person name="Coates N.J."/>
            <person name="Koehn F.E."/>
            <person name="Skotnicki J.S."/>
            <person name="Carter G.T."/>
            <person name="Gregory M.A."/>
            <person name="Martin C.J."/>
            <person name="Moss S.J."/>
            <person name="Leadlay P.F."/>
            <person name="Wilkinson B."/>
        </authorList>
    </citation>
    <scope>FUNCTION</scope>
    <scope>CATALYTIC ACTIVITY</scope>
    <scope>BIOPHYSICOCHEMICAL PROPERTIES</scope>
</reference>
<reference key="3">
    <citation type="journal article" date="2014" name="J. Mol. Biol.">
        <title>Mechanistic implications for the chorismatase FkbO based on the crystal structure.</title>
        <authorList>
            <person name="Juneja P."/>
            <person name="Hubrich F."/>
            <person name="Diederichs K."/>
            <person name="Welte W."/>
            <person name="Andexer J.N."/>
        </authorList>
    </citation>
    <scope>X-RAY CRYSTALLOGRAPHY (1.08 ANGSTROMS) IN COMPLEX WITH SUBSTRATE ANALOG</scope>
    <scope>FUNCTION</scope>
    <scope>CATALYTIC ACTIVITY</scope>
    <scope>BIOPHYSICOCHEMICAL PROPERTIES</scope>
    <scope>MUTAGENESIS OF TYR-215; ARG-228 AND GLU-338</scope>
    <scope>ACTIVITY REGULATION</scope>
    <scope>ACTIVE SITE</scope>
    <scope>REACTION MECHANISM</scope>
    <scope>SUBUNIT</scope>
</reference>
<proteinExistence type="evidence at protein level"/>
<sequence length="344" mass="36947">MTDAGRQGRVEALSISVTAPYCRFEKTGSPDLEGDETVLGLIEHGTGHTDVSLVDGAPRTAVHTTTRDDEAFTEVWHAQRPVESGMDNGIAWARTDAYLFGVVRTGESGRYADATAALYTNVFQLTRSLGYPLLARTWNYVSGINTTNADGLEVYRDFCVGRAQALDEGGIDPATMPAATGIGAHGGGITCVFLAARGGVRINIENPAVLTAHHYPTTYGPRPPVFARATWLGPPEGGRLFISATAGILGHRTVHHGDVTGQCEVALDNMARVIGAENLRRHGVQRGHVLADVDHLKVYVRRREDLDTVRRVCAARLSSTAAVALLHTDIAREDLLVEIEGMVA</sequence>
<protein>
    <recommendedName>
        <fullName evidence="3">Chorismatase</fullName>
        <ecNumber evidence="1 2">3.3.2.13</ecNumber>
    </recommendedName>
    <alternativeName>
        <fullName evidence="3">Chorismate hydrolase</fullName>
    </alternativeName>
</protein>